<gene>
    <name evidence="1" type="primary">atpA</name>
    <name type="ordered locus">Smed_2924</name>
</gene>
<organism>
    <name type="scientific">Sinorhizobium medicae (strain WSM419)</name>
    <name type="common">Ensifer medicae</name>
    <dbReference type="NCBI Taxonomy" id="366394"/>
    <lineage>
        <taxon>Bacteria</taxon>
        <taxon>Pseudomonadati</taxon>
        <taxon>Pseudomonadota</taxon>
        <taxon>Alphaproteobacteria</taxon>
        <taxon>Hyphomicrobiales</taxon>
        <taxon>Rhizobiaceae</taxon>
        <taxon>Sinorhizobium/Ensifer group</taxon>
        <taxon>Sinorhizobium</taxon>
    </lineage>
</organism>
<dbReference type="EC" id="7.1.2.2" evidence="1"/>
<dbReference type="EMBL" id="CP000738">
    <property type="protein sequence ID" value="ABR61753.1"/>
    <property type="molecule type" value="Genomic_DNA"/>
</dbReference>
<dbReference type="RefSeq" id="WP_012067135.1">
    <property type="nucleotide sequence ID" value="NC_009636.1"/>
</dbReference>
<dbReference type="RefSeq" id="YP_001328588.1">
    <property type="nucleotide sequence ID" value="NC_009636.1"/>
</dbReference>
<dbReference type="SMR" id="A6UDM3"/>
<dbReference type="STRING" id="366394.Smed_2924"/>
<dbReference type="GeneID" id="61610511"/>
<dbReference type="KEGG" id="smd:Smed_2924"/>
<dbReference type="PATRIC" id="fig|366394.8.peg.6141"/>
<dbReference type="eggNOG" id="COG0056">
    <property type="taxonomic scope" value="Bacteria"/>
</dbReference>
<dbReference type="HOGENOM" id="CLU_010091_2_1_5"/>
<dbReference type="OrthoDB" id="9803053at2"/>
<dbReference type="Proteomes" id="UP000001108">
    <property type="component" value="Chromosome"/>
</dbReference>
<dbReference type="GO" id="GO:0005886">
    <property type="term" value="C:plasma membrane"/>
    <property type="evidence" value="ECO:0007669"/>
    <property type="project" value="UniProtKB-SubCell"/>
</dbReference>
<dbReference type="GO" id="GO:0045259">
    <property type="term" value="C:proton-transporting ATP synthase complex"/>
    <property type="evidence" value="ECO:0007669"/>
    <property type="project" value="UniProtKB-KW"/>
</dbReference>
<dbReference type="GO" id="GO:0043531">
    <property type="term" value="F:ADP binding"/>
    <property type="evidence" value="ECO:0007669"/>
    <property type="project" value="TreeGrafter"/>
</dbReference>
<dbReference type="GO" id="GO:0005524">
    <property type="term" value="F:ATP binding"/>
    <property type="evidence" value="ECO:0007669"/>
    <property type="project" value="UniProtKB-UniRule"/>
</dbReference>
<dbReference type="GO" id="GO:0046933">
    <property type="term" value="F:proton-transporting ATP synthase activity, rotational mechanism"/>
    <property type="evidence" value="ECO:0007669"/>
    <property type="project" value="UniProtKB-UniRule"/>
</dbReference>
<dbReference type="CDD" id="cd18113">
    <property type="entry name" value="ATP-synt_F1_alpha_C"/>
    <property type="match status" value="1"/>
</dbReference>
<dbReference type="CDD" id="cd18116">
    <property type="entry name" value="ATP-synt_F1_alpha_N"/>
    <property type="match status" value="1"/>
</dbReference>
<dbReference type="CDD" id="cd01132">
    <property type="entry name" value="F1-ATPase_alpha_CD"/>
    <property type="match status" value="1"/>
</dbReference>
<dbReference type="FunFam" id="1.20.150.20:FF:000001">
    <property type="entry name" value="ATP synthase subunit alpha"/>
    <property type="match status" value="1"/>
</dbReference>
<dbReference type="FunFam" id="2.40.30.20:FF:000001">
    <property type="entry name" value="ATP synthase subunit alpha"/>
    <property type="match status" value="1"/>
</dbReference>
<dbReference type="FunFam" id="3.40.50.300:FF:002432">
    <property type="entry name" value="ATP synthase subunit alpha, mitochondrial"/>
    <property type="match status" value="1"/>
</dbReference>
<dbReference type="Gene3D" id="2.40.30.20">
    <property type="match status" value="1"/>
</dbReference>
<dbReference type="Gene3D" id="1.20.150.20">
    <property type="entry name" value="ATP synthase alpha/beta chain, C-terminal domain"/>
    <property type="match status" value="1"/>
</dbReference>
<dbReference type="Gene3D" id="3.40.50.300">
    <property type="entry name" value="P-loop containing nucleotide triphosphate hydrolases"/>
    <property type="match status" value="1"/>
</dbReference>
<dbReference type="HAMAP" id="MF_01346">
    <property type="entry name" value="ATP_synth_alpha_bact"/>
    <property type="match status" value="1"/>
</dbReference>
<dbReference type="InterPro" id="IPR023366">
    <property type="entry name" value="ATP_synth_asu-like_sf"/>
</dbReference>
<dbReference type="InterPro" id="IPR000793">
    <property type="entry name" value="ATP_synth_asu_C"/>
</dbReference>
<dbReference type="InterPro" id="IPR038376">
    <property type="entry name" value="ATP_synth_asu_C_sf"/>
</dbReference>
<dbReference type="InterPro" id="IPR033732">
    <property type="entry name" value="ATP_synth_F1_a_nt-bd_dom"/>
</dbReference>
<dbReference type="InterPro" id="IPR005294">
    <property type="entry name" value="ATP_synth_F1_asu"/>
</dbReference>
<dbReference type="InterPro" id="IPR020003">
    <property type="entry name" value="ATPase_a/bsu_AS"/>
</dbReference>
<dbReference type="InterPro" id="IPR004100">
    <property type="entry name" value="ATPase_F1/V1/A1_a/bsu_N"/>
</dbReference>
<dbReference type="InterPro" id="IPR036121">
    <property type="entry name" value="ATPase_F1/V1/A1_a/bsu_N_sf"/>
</dbReference>
<dbReference type="InterPro" id="IPR000194">
    <property type="entry name" value="ATPase_F1/V1/A1_a/bsu_nucl-bd"/>
</dbReference>
<dbReference type="InterPro" id="IPR027417">
    <property type="entry name" value="P-loop_NTPase"/>
</dbReference>
<dbReference type="NCBIfam" id="TIGR00962">
    <property type="entry name" value="atpA"/>
    <property type="match status" value="1"/>
</dbReference>
<dbReference type="NCBIfam" id="NF009884">
    <property type="entry name" value="PRK13343.1"/>
    <property type="match status" value="1"/>
</dbReference>
<dbReference type="PANTHER" id="PTHR48082">
    <property type="entry name" value="ATP SYNTHASE SUBUNIT ALPHA, MITOCHONDRIAL"/>
    <property type="match status" value="1"/>
</dbReference>
<dbReference type="PANTHER" id="PTHR48082:SF2">
    <property type="entry name" value="ATP SYNTHASE SUBUNIT ALPHA, MITOCHONDRIAL"/>
    <property type="match status" value="1"/>
</dbReference>
<dbReference type="Pfam" id="PF00006">
    <property type="entry name" value="ATP-synt_ab"/>
    <property type="match status" value="1"/>
</dbReference>
<dbReference type="Pfam" id="PF00306">
    <property type="entry name" value="ATP-synt_ab_C"/>
    <property type="match status" value="1"/>
</dbReference>
<dbReference type="Pfam" id="PF02874">
    <property type="entry name" value="ATP-synt_ab_N"/>
    <property type="match status" value="1"/>
</dbReference>
<dbReference type="PIRSF" id="PIRSF039088">
    <property type="entry name" value="F_ATPase_subunit_alpha"/>
    <property type="match status" value="1"/>
</dbReference>
<dbReference type="SUPFAM" id="SSF47917">
    <property type="entry name" value="C-terminal domain of alpha and beta subunits of F1 ATP synthase"/>
    <property type="match status" value="1"/>
</dbReference>
<dbReference type="SUPFAM" id="SSF50615">
    <property type="entry name" value="N-terminal domain of alpha and beta subunits of F1 ATP synthase"/>
    <property type="match status" value="1"/>
</dbReference>
<dbReference type="SUPFAM" id="SSF52540">
    <property type="entry name" value="P-loop containing nucleoside triphosphate hydrolases"/>
    <property type="match status" value="1"/>
</dbReference>
<dbReference type="PROSITE" id="PS00152">
    <property type="entry name" value="ATPASE_ALPHA_BETA"/>
    <property type="match status" value="1"/>
</dbReference>
<accession>A6UDM3</accession>
<comment type="function">
    <text evidence="1">Produces ATP from ADP in the presence of a proton gradient across the membrane. The alpha chain is a regulatory subunit.</text>
</comment>
<comment type="catalytic activity">
    <reaction evidence="1">
        <text>ATP + H2O + 4 H(+)(in) = ADP + phosphate + 5 H(+)(out)</text>
        <dbReference type="Rhea" id="RHEA:57720"/>
        <dbReference type="ChEBI" id="CHEBI:15377"/>
        <dbReference type="ChEBI" id="CHEBI:15378"/>
        <dbReference type="ChEBI" id="CHEBI:30616"/>
        <dbReference type="ChEBI" id="CHEBI:43474"/>
        <dbReference type="ChEBI" id="CHEBI:456216"/>
        <dbReference type="EC" id="7.1.2.2"/>
    </reaction>
</comment>
<comment type="subunit">
    <text evidence="1">F-type ATPases have 2 components, CF(1) - the catalytic core - and CF(0) - the membrane proton channel. CF(1) has five subunits: alpha(3), beta(3), gamma(1), delta(1), epsilon(1). CF(0) has three main subunits: a(1), b(2) and c(9-12). The alpha and beta chains form an alternating ring which encloses part of the gamma chain. CF(1) is attached to CF(0) by a central stalk formed by the gamma and epsilon chains, while a peripheral stalk is formed by the delta and b chains.</text>
</comment>
<comment type="subcellular location">
    <subcellularLocation>
        <location evidence="1">Cell inner membrane</location>
        <topology evidence="1">Peripheral membrane protein</topology>
    </subcellularLocation>
</comment>
<comment type="similarity">
    <text evidence="1">Belongs to the ATPase alpha/beta chains family.</text>
</comment>
<keyword id="KW-0066">ATP synthesis</keyword>
<keyword id="KW-0067">ATP-binding</keyword>
<keyword id="KW-0997">Cell inner membrane</keyword>
<keyword id="KW-1003">Cell membrane</keyword>
<keyword id="KW-0139">CF(1)</keyword>
<keyword id="KW-0375">Hydrogen ion transport</keyword>
<keyword id="KW-0406">Ion transport</keyword>
<keyword id="KW-0472">Membrane</keyword>
<keyword id="KW-0547">Nucleotide-binding</keyword>
<keyword id="KW-1278">Translocase</keyword>
<keyword id="KW-0813">Transport</keyword>
<sequence length="509" mass="54620">MDIRAAEISAILKDQIKNFGQEAEVSEVGQVLSVGDGIARVYGLDNVQAGEMVEFPGGIRGMALNLEADNVGVVIFGSDRDIKEGDTVKRTGAIVDVPVGPELLGRVVDALGNPIDGKGPINAKQRARVDVKAPGIIPRKSVHEPMSTGLKAIDALIPVGRGQRELVIGDRQTGKTAIILDTILNQKAIHDNGPEGDKLYCVYVAIGQKRSTVAQFVKVLEERGALQYSIIVAATASDAAPMQYLAPFAGCTMGEYFRDSGKHALIGYDDLSKQAVAYRQMSLLLRRPPGREAYPGDVFYLHSRLLERAAKLNDDNGAGSLTALPVIETQGNDVSAFIPTNVISITDGQIFLETDLFYQGIRPAVNVGLSVSRVGSSAQIKAMKQVAGSIKGELAQYREMAAFAQFGSDLDAATQRLLNRGARLTELLKQPQFSPLKTEEQVAVIFAGVNGFLDKLPVADVGKFEQGLLSYMRSEGKAVLDTIRTEKAISDDTKAKLKAAIDSFAKSFA</sequence>
<feature type="chain" id="PRO_1000055083" description="ATP synthase subunit alpha">
    <location>
        <begin position="1"/>
        <end position="509"/>
    </location>
</feature>
<feature type="binding site" evidence="1">
    <location>
        <begin position="169"/>
        <end position="176"/>
    </location>
    <ligand>
        <name>ATP</name>
        <dbReference type="ChEBI" id="CHEBI:30616"/>
    </ligand>
</feature>
<feature type="site" description="Required for activity" evidence="1">
    <location>
        <position position="370"/>
    </location>
</feature>
<name>ATPA_SINMW</name>
<proteinExistence type="inferred from homology"/>
<reference key="1">
    <citation type="submission" date="2007-06" db="EMBL/GenBank/DDBJ databases">
        <title>Complete sequence of Sinorhizobium medicae WSM419 chromosome.</title>
        <authorList>
            <consortium name="US DOE Joint Genome Institute"/>
            <person name="Copeland A."/>
            <person name="Lucas S."/>
            <person name="Lapidus A."/>
            <person name="Barry K."/>
            <person name="Glavina del Rio T."/>
            <person name="Dalin E."/>
            <person name="Tice H."/>
            <person name="Pitluck S."/>
            <person name="Chain P."/>
            <person name="Malfatti S."/>
            <person name="Shin M."/>
            <person name="Vergez L."/>
            <person name="Schmutz J."/>
            <person name="Larimer F."/>
            <person name="Land M."/>
            <person name="Hauser L."/>
            <person name="Kyrpides N."/>
            <person name="Mikhailova N."/>
            <person name="Reeve W.G."/>
            <person name="Richardson P."/>
        </authorList>
    </citation>
    <scope>NUCLEOTIDE SEQUENCE [LARGE SCALE GENOMIC DNA]</scope>
    <source>
        <strain>WSM419</strain>
    </source>
</reference>
<protein>
    <recommendedName>
        <fullName evidence="1">ATP synthase subunit alpha</fullName>
        <ecNumber evidence="1">7.1.2.2</ecNumber>
    </recommendedName>
    <alternativeName>
        <fullName evidence="1">ATP synthase F1 sector subunit alpha</fullName>
    </alternativeName>
    <alternativeName>
        <fullName evidence="1">F-ATPase subunit alpha</fullName>
    </alternativeName>
</protein>
<evidence type="ECO:0000255" key="1">
    <source>
        <dbReference type="HAMAP-Rule" id="MF_01346"/>
    </source>
</evidence>